<feature type="chain" id="PRO_0000330467" description="Type-1 glutamine synthetase 1">
    <location>
        <begin position="1"/>
        <end position="499"/>
    </location>
</feature>
<feature type="domain" description="GS beta-grasp" evidence="1">
    <location>
        <begin position="50"/>
        <end position="146"/>
    </location>
</feature>
<feature type="domain" description="GS catalytic" evidence="2">
    <location>
        <begin position="158"/>
        <end position="499"/>
    </location>
</feature>
<organism>
    <name type="scientific">Dictyostelium discoideum</name>
    <name type="common">Social amoeba</name>
    <dbReference type="NCBI Taxonomy" id="44689"/>
    <lineage>
        <taxon>Eukaryota</taxon>
        <taxon>Amoebozoa</taxon>
        <taxon>Evosea</taxon>
        <taxon>Eumycetozoa</taxon>
        <taxon>Dictyostelia</taxon>
        <taxon>Dictyosteliales</taxon>
        <taxon>Dictyosteliaceae</taxon>
        <taxon>Dictyostelium</taxon>
    </lineage>
</organism>
<protein>
    <recommendedName>
        <fullName>Type-1 glutamine synthetase 1</fullName>
        <shortName>Type-1 GS 1</shortName>
        <ecNumber>6.3.1.2</ecNumber>
    </recommendedName>
    <alternativeName>
        <fullName>Type-1 glutamate--ammonia ligase 1</fullName>
    </alternativeName>
</protein>
<evidence type="ECO:0000255" key="1">
    <source>
        <dbReference type="PROSITE-ProRule" id="PRU01330"/>
    </source>
</evidence>
<evidence type="ECO:0000255" key="2">
    <source>
        <dbReference type="PROSITE-ProRule" id="PRU01331"/>
    </source>
</evidence>
<evidence type="ECO:0000305" key="3"/>
<accession>Q86B00</accession>
<accession>Q550K6</accession>
<comment type="catalytic activity">
    <reaction>
        <text>L-glutamate + NH4(+) + ATP = L-glutamine + ADP + phosphate + H(+)</text>
        <dbReference type="Rhea" id="RHEA:16169"/>
        <dbReference type="ChEBI" id="CHEBI:15378"/>
        <dbReference type="ChEBI" id="CHEBI:28938"/>
        <dbReference type="ChEBI" id="CHEBI:29985"/>
        <dbReference type="ChEBI" id="CHEBI:30616"/>
        <dbReference type="ChEBI" id="CHEBI:43474"/>
        <dbReference type="ChEBI" id="CHEBI:58359"/>
        <dbReference type="ChEBI" id="CHEBI:456216"/>
        <dbReference type="EC" id="6.3.1.2"/>
    </reaction>
</comment>
<comment type="similarity">
    <text evidence="3">Belongs to the glutamine synthetase family.</text>
</comment>
<sequence>MIEPQNNKNINNNIYNNNNNNFKMNQDENQLILNSKQLLEKIKISKKKNPQLKFIRVCWIDISNKIRTKAINIDWILNHEPKLIHVSITNVCMSLLCFEDSVTIEALKSENFGEAFLIPITTTKLNILPYCPSHIQIFGEFFYLDNESKKLKPWLLCPRNSLQRAIDRLKNKFGISLKGSFEEEFYLIKKGDNNNSSVASLLNSIEKLDHGTFANYHSLDCYGDILEKITNALEEQGLPIEQLLSESGSGQFEITIDYTDIMEACDRHIIVRQTINSIASYNGYIATFIPKPFDGLVGSGCHAHLSLWDTNDSNLTPDANGECGLSLVNQFFIGGLLKHSKSLTALFNTTPNSYKRLKPFYWSGCNVSWGLDNKESFIRIPSSPFSATDGCSNFEIKTIDHTSNPYLAMAGIIHAGFDGIENSIAPPPPTSLFDQSVLNNQLIPSNFEDAIQSLKENHYLCENIGNDISNAFIHVKLAENKILKELSDDDQILKLLELF</sequence>
<reference key="1">
    <citation type="journal article" date="2002" name="Nature">
        <title>Sequence and analysis of chromosome 2 of Dictyostelium discoideum.</title>
        <authorList>
            <person name="Gloeckner G."/>
            <person name="Eichinger L."/>
            <person name="Szafranski K."/>
            <person name="Pachebat J.A."/>
            <person name="Bankier A.T."/>
            <person name="Dear P.H."/>
            <person name="Lehmann R."/>
            <person name="Baumgart C."/>
            <person name="Parra G."/>
            <person name="Abril J.F."/>
            <person name="Guigo R."/>
            <person name="Kumpf K."/>
            <person name="Tunggal B."/>
            <person name="Cox E.C."/>
            <person name="Quail M.A."/>
            <person name="Platzer M."/>
            <person name="Rosenthal A."/>
            <person name="Noegel A.A."/>
        </authorList>
    </citation>
    <scope>NUCLEOTIDE SEQUENCE [LARGE SCALE GENOMIC DNA]</scope>
    <source>
        <strain>AX4</strain>
    </source>
</reference>
<reference key="2">
    <citation type="journal article" date="2005" name="Nature">
        <title>The genome of the social amoeba Dictyostelium discoideum.</title>
        <authorList>
            <person name="Eichinger L."/>
            <person name="Pachebat J.A."/>
            <person name="Gloeckner G."/>
            <person name="Rajandream M.A."/>
            <person name="Sucgang R."/>
            <person name="Berriman M."/>
            <person name="Song J."/>
            <person name="Olsen R."/>
            <person name="Szafranski K."/>
            <person name="Xu Q."/>
            <person name="Tunggal B."/>
            <person name="Kummerfeld S."/>
            <person name="Madera M."/>
            <person name="Konfortov B.A."/>
            <person name="Rivero F."/>
            <person name="Bankier A.T."/>
            <person name="Lehmann R."/>
            <person name="Hamlin N."/>
            <person name="Davies R."/>
            <person name="Gaudet P."/>
            <person name="Fey P."/>
            <person name="Pilcher K."/>
            <person name="Chen G."/>
            <person name="Saunders D."/>
            <person name="Sodergren E.J."/>
            <person name="Davis P."/>
            <person name="Kerhornou A."/>
            <person name="Nie X."/>
            <person name="Hall N."/>
            <person name="Anjard C."/>
            <person name="Hemphill L."/>
            <person name="Bason N."/>
            <person name="Farbrother P."/>
            <person name="Desany B."/>
            <person name="Just E."/>
            <person name="Morio T."/>
            <person name="Rost R."/>
            <person name="Churcher C.M."/>
            <person name="Cooper J."/>
            <person name="Haydock S."/>
            <person name="van Driessche N."/>
            <person name="Cronin A."/>
            <person name="Goodhead I."/>
            <person name="Muzny D.M."/>
            <person name="Mourier T."/>
            <person name="Pain A."/>
            <person name="Lu M."/>
            <person name="Harper D."/>
            <person name="Lindsay R."/>
            <person name="Hauser H."/>
            <person name="James K.D."/>
            <person name="Quiles M."/>
            <person name="Madan Babu M."/>
            <person name="Saito T."/>
            <person name="Buchrieser C."/>
            <person name="Wardroper A."/>
            <person name="Felder M."/>
            <person name="Thangavelu M."/>
            <person name="Johnson D."/>
            <person name="Knights A."/>
            <person name="Loulseged H."/>
            <person name="Mungall K.L."/>
            <person name="Oliver K."/>
            <person name="Price C."/>
            <person name="Quail M.A."/>
            <person name="Urushihara H."/>
            <person name="Hernandez J."/>
            <person name="Rabbinowitsch E."/>
            <person name="Steffen D."/>
            <person name="Sanders M."/>
            <person name="Ma J."/>
            <person name="Kohara Y."/>
            <person name="Sharp S."/>
            <person name="Simmonds M.N."/>
            <person name="Spiegler S."/>
            <person name="Tivey A."/>
            <person name="Sugano S."/>
            <person name="White B."/>
            <person name="Walker D."/>
            <person name="Woodward J.R."/>
            <person name="Winckler T."/>
            <person name="Tanaka Y."/>
            <person name="Shaulsky G."/>
            <person name="Schleicher M."/>
            <person name="Weinstock G.M."/>
            <person name="Rosenthal A."/>
            <person name="Cox E.C."/>
            <person name="Chisholm R.L."/>
            <person name="Gibbs R.A."/>
            <person name="Loomis W.F."/>
            <person name="Platzer M."/>
            <person name="Kay R.R."/>
            <person name="Williams J.G."/>
            <person name="Dear P.H."/>
            <person name="Noegel A.A."/>
            <person name="Barrell B.G."/>
            <person name="Kuspa A."/>
        </authorList>
    </citation>
    <scope>NUCLEOTIDE SEQUENCE [LARGE SCALE GENOMIC DNA]</scope>
    <source>
        <strain>AX4</strain>
    </source>
</reference>
<proteinExistence type="inferred from homology"/>
<name>GLNA1_DICDI</name>
<gene>
    <name type="primary">glnA1</name>
    <name type="synonym">glnA</name>
    <name type="ORF">DDB_G0276835</name>
</gene>
<keyword id="KW-0067">ATP-binding</keyword>
<keyword id="KW-0436">Ligase</keyword>
<keyword id="KW-0547">Nucleotide-binding</keyword>
<keyword id="KW-1185">Reference proteome</keyword>
<dbReference type="EC" id="6.3.1.2"/>
<dbReference type="EMBL" id="AAFI02000019">
    <property type="protein sequence ID" value="EAL68919.1"/>
    <property type="molecule type" value="Genomic_DNA"/>
</dbReference>
<dbReference type="RefSeq" id="XP_642926.1">
    <property type="nucleotide sequence ID" value="XM_637834.1"/>
</dbReference>
<dbReference type="SMR" id="Q86B00"/>
<dbReference type="FunCoup" id="Q86B00">
    <property type="interactions" value="88"/>
</dbReference>
<dbReference type="STRING" id="44689.Q86B00"/>
<dbReference type="PaxDb" id="44689-DDB0231552"/>
<dbReference type="EnsemblProtists" id="EAL68919">
    <property type="protein sequence ID" value="EAL68919"/>
    <property type="gene ID" value="DDB_G0276835"/>
</dbReference>
<dbReference type="GeneID" id="8620795"/>
<dbReference type="KEGG" id="ddi:DDB_G0276835"/>
<dbReference type="dictyBase" id="DDB_G0276835">
    <property type="gene designation" value="glnA1"/>
</dbReference>
<dbReference type="VEuPathDB" id="AmoebaDB:DDB_G0276835"/>
<dbReference type="eggNOG" id="KOG0683">
    <property type="taxonomic scope" value="Eukaryota"/>
</dbReference>
<dbReference type="HOGENOM" id="CLU_017290_6_0_1"/>
<dbReference type="InParanoid" id="Q86B00"/>
<dbReference type="OMA" id="CNPGQHE"/>
<dbReference type="PhylomeDB" id="Q86B00"/>
<dbReference type="PRO" id="PR:Q86B00"/>
<dbReference type="Proteomes" id="UP000002195">
    <property type="component" value="Chromosome 2"/>
</dbReference>
<dbReference type="GO" id="GO:0005524">
    <property type="term" value="F:ATP binding"/>
    <property type="evidence" value="ECO:0007669"/>
    <property type="project" value="UniProtKB-KW"/>
</dbReference>
<dbReference type="GO" id="GO:0004356">
    <property type="term" value="F:glutamine synthetase activity"/>
    <property type="evidence" value="ECO:0007669"/>
    <property type="project" value="UniProtKB-EC"/>
</dbReference>
<dbReference type="GO" id="GO:0006542">
    <property type="term" value="P:glutamine biosynthetic process"/>
    <property type="evidence" value="ECO:0007669"/>
    <property type="project" value="InterPro"/>
</dbReference>
<dbReference type="FunFam" id="3.30.590.10:FF:000020">
    <property type="entry name" value="Putative glutamine synthetase"/>
    <property type="match status" value="1"/>
</dbReference>
<dbReference type="Gene3D" id="3.30.590.10">
    <property type="entry name" value="Glutamine synthetase/guanido kinase, catalytic domain"/>
    <property type="match status" value="1"/>
</dbReference>
<dbReference type="InterPro" id="IPR008147">
    <property type="entry name" value="Gln_synt_N"/>
</dbReference>
<dbReference type="InterPro" id="IPR014746">
    <property type="entry name" value="Gln_synth/guanido_kin_cat_dom"/>
</dbReference>
<dbReference type="InterPro" id="IPR008146">
    <property type="entry name" value="Gln_synth_cat_dom"/>
</dbReference>
<dbReference type="PANTHER" id="PTHR43785">
    <property type="entry name" value="GAMMA-GLUTAMYLPUTRESCINE SYNTHETASE"/>
    <property type="match status" value="1"/>
</dbReference>
<dbReference type="PANTHER" id="PTHR43785:SF2">
    <property type="entry name" value="TYPE-1 GLUTAMINE SYNTHETASE 1"/>
    <property type="match status" value="1"/>
</dbReference>
<dbReference type="Pfam" id="PF00120">
    <property type="entry name" value="Gln-synt_C"/>
    <property type="match status" value="1"/>
</dbReference>
<dbReference type="SMART" id="SM01230">
    <property type="entry name" value="Gln-synt_C"/>
    <property type="match status" value="1"/>
</dbReference>
<dbReference type="SUPFAM" id="SSF55931">
    <property type="entry name" value="Glutamine synthetase/guanido kinase"/>
    <property type="match status" value="1"/>
</dbReference>
<dbReference type="PROSITE" id="PS51986">
    <property type="entry name" value="GS_BETA_GRASP"/>
    <property type="match status" value="1"/>
</dbReference>
<dbReference type="PROSITE" id="PS51987">
    <property type="entry name" value="GS_CATALYTIC"/>
    <property type="match status" value="1"/>
</dbReference>